<dbReference type="EMBL" id="CP001104">
    <property type="protein sequence ID" value="ACR72152.1"/>
    <property type="molecule type" value="Genomic_DNA"/>
</dbReference>
<dbReference type="RefSeq" id="WP_012739387.1">
    <property type="nucleotide sequence ID" value="NC_012778.1"/>
</dbReference>
<dbReference type="SMR" id="C4Z0N9"/>
<dbReference type="STRING" id="515620.EUBELI_01152"/>
<dbReference type="GeneID" id="41355876"/>
<dbReference type="KEGG" id="eel:EUBELI_01152"/>
<dbReference type="eggNOG" id="COG1799">
    <property type="taxonomic scope" value="Bacteria"/>
</dbReference>
<dbReference type="HOGENOM" id="CLU_078499_4_0_9"/>
<dbReference type="Proteomes" id="UP000001476">
    <property type="component" value="Chromosome"/>
</dbReference>
<dbReference type="GO" id="GO:0005737">
    <property type="term" value="C:cytoplasm"/>
    <property type="evidence" value="ECO:0007669"/>
    <property type="project" value="UniProtKB-SubCell"/>
</dbReference>
<dbReference type="GO" id="GO:0000917">
    <property type="term" value="P:division septum assembly"/>
    <property type="evidence" value="ECO:0007669"/>
    <property type="project" value="UniProtKB-KW"/>
</dbReference>
<dbReference type="GO" id="GO:0043093">
    <property type="term" value="P:FtsZ-dependent cytokinesis"/>
    <property type="evidence" value="ECO:0007669"/>
    <property type="project" value="UniProtKB-UniRule"/>
</dbReference>
<dbReference type="Gene3D" id="3.30.110.150">
    <property type="entry name" value="SepF-like protein"/>
    <property type="match status" value="1"/>
</dbReference>
<dbReference type="HAMAP" id="MF_01197">
    <property type="entry name" value="SepF"/>
    <property type="match status" value="1"/>
</dbReference>
<dbReference type="InterPro" id="IPR023052">
    <property type="entry name" value="Cell_div_SepF"/>
</dbReference>
<dbReference type="InterPro" id="IPR007561">
    <property type="entry name" value="Cell_div_SepF/SepF-rel"/>
</dbReference>
<dbReference type="InterPro" id="IPR038594">
    <property type="entry name" value="SepF-like_sf"/>
</dbReference>
<dbReference type="PANTHER" id="PTHR35798">
    <property type="entry name" value="CELL DIVISION PROTEIN SEPF"/>
    <property type="match status" value="1"/>
</dbReference>
<dbReference type="PANTHER" id="PTHR35798:SF1">
    <property type="entry name" value="CELL DIVISION PROTEIN SEPF"/>
    <property type="match status" value="1"/>
</dbReference>
<dbReference type="Pfam" id="PF04472">
    <property type="entry name" value="SepF"/>
    <property type="match status" value="1"/>
</dbReference>
<protein>
    <recommendedName>
        <fullName evidence="1">Cell division protein SepF</fullName>
    </recommendedName>
</protein>
<proteinExistence type="inferred from homology"/>
<comment type="function">
    <text evidence="1">Cell division protein that is part of the divisome complex and is recruited early to the Z-ring. Probably stimulates Z-ring formation, perhaps through the cross-linking of FtsZ protofilaments. Its function overlaps with FtsA.</text>
</comment>
<comment type="subunit">
    <text evidence="1">Homodimer. Interacts with FtsZ.</text>
</comment>
<comment type="subcellular location">
    <subcellularLocation>
        <location evidence="1">Cytoplasm</location>
    </subcellularLocation>
    <text evidence="1">Localizes to the division site, in a FtsZ-dependent manner.</text>
</comment>
<comment type="similarity">
    <text evidence="1">Belongs to the SepF family.</text>
</comment>
<keyword id="KW-0131">Cell cycle</keyword>
<keyword id="KW-0132">Cell division</keyword>
<keyword id="KW-0963">Cytoplasm</keyword>
<keyword id="KW-1185">Reference proteome</keyword>
<keyword id="KW-0717">Septation</keyword>
<name>SEPF_LACE2</name>
<evidence type="ECO:0000255" key="1">
    <source>
        <dbReference type="HAMAP-Rule" id="MF_01197"/>
    </source>
</evidence>
<evidence type="ECO:0000256" key="2">
    <source>
        <dbReference type="SAM" id="MobiDB-lite"/>
    </source>
</evidence>
<organism>
    <name type="scientific">Lachnospira eligens (strain ATCC 27750 / DSM 3376 / VPI C15-48 / C15-B4)</name>
    <name type="common">Eubacterium eligens</name>
    <dbReference type="NCBI Taxonomy" id="515620"/>
    <lineage>
        <taxon>Bacteria</taxon>
        <taxon>Bacillati</taxon>
        <taxon>Bacillota</taxon>
        <taxon>Clostridia</taxon>
        <taxon>Lachnospirales</taxon>
        <taxon>Lachnospiraceae</taxon>
        <taxon>Lachnospira</taxon>
    </lineage>
</organism>
<reference key="1">
    <citation type="journal article" date="2009" name="Proc. Natl. Acad. Sci. U.S.A.">
        <title>Characterizing a model human gut microbiota composed of members of its two dominant bacterial phyla.</title>
        <authorList>
            <person name="Mahowald M.A."/>
            <person name="Rey F.E."/>
            <person name="Seedorf H."/>
            <person name="Turnbaugh P.J."/>
            <person name="Fulton R.S."/>
            <person name="Wollam A."/>
            <person name="Shah N."/>
            <person name="Wang C."/>
            <person name="Magrini V."/>
            <person name="Wilson R.K."/>
            <person name="Cantarel B.L."/>
            <person name="Coutinho P.M."/>
            <person name="Henrissat B."/>
            <person name="Crock L.W."/>
            <person name="Russell A."/>
            <person name="Verberkmoes N.C."/>
            <person name="Hettich R.L."/>
            <person name="Gordon J.I."/>
        </authorList>
    </citation>
    <scope>NUCLEOTIDE SEQUENCE [LARGE SCALE GENOMIC DNA]</scope>
    <source>
        <strain>ATCC 27750 / DSM 3376 / VPI C15-48 / C15-B4</strain>
    </source>
</reference>
<feature type="chain" id="PRO_1000213808" description="Cell division protein SepF">
    <location>
        <begin position="1"/>
        <end position="183"/>
    </location>
</feature>
<feature type="region of interest" description="Disordered" evidence="2">
    <location>
        <begin position="13"/>
        <end position="58"/>
    </location>
</feature>
<feature type="compositionally biased region" description="Acidic residues" evidence="2">
    <location>
        <begin position="16"/>
        <end position="36"/>
    </location>
</feature>
<accession>C4Z0N9</accession>
<sequence length="183" mass="20536">MGMLDGLTNMFKMHDDDDFDDDYEDYDDDFDEDYEDDKPSARKRLFTGSSKKDSVADEEVSYTAEKPRFASKSKVVPMKTQSARGLEVVVIRPESMEDAKEITDTLLTGKAVVLNLEGIHVEIAQRIIDYSAGSTYAIRGNLQKITNYIFLVTPPNVDISGDIPEIVTGGIDLSSFNKNENRF</sequence>
<gene>
    <name evidence="1" type="primary">sepF</name>
    <name type="ordered locus">EUBELI_01152</name>
</gene>